<dbReference type="EMBL" id="Z11858">
    <property type="protein sequence ID" value="CAA77884.1"/>
    <property type="molecule type" value="Genomic_DNA"/>
</dbReference>
<dbReference type="EMBL" id="AF362474">
    <property type="protein sequence ID" value="AAK83827.1"/>
    <property type="molecule type" value="Genomic_DNA"/>
</dbReference>
<dbReference type="EMBL" id="AF362478">
    <property type="protein sequence ID" value="AAK83840.1"/>
    <property type="molecule type" value="Genomic_DNA"/>
</dbReference>
<dbReference type="EMBL" id="AF362479">
    <property type="protein sequence ID" value="AAK83841.1"/>
    <property type="molecule type" value="Genomic_DNA"/>
</dbReference>
<dbReference type="EMBL" id="AL163912">
    <property type="protein sequence ID" value="CAB87944.1"/>
    <property type="molecule type" value="Genomic_DNA"/>
</dbReference>
<dbReference type="EMBL" id="CP002688">
    <property type="protein sequence ID" value="AED91175.1"/>
    <property type="molecule type" value="Genomic_DNA"/>
</dbReference>
<dbReference type="EMBL" id="AY063954">
    <property type="protein sequence ID" value="AAL36310.1"/>
    <property type="molecule type" value="mRNA"/>
</dbReference>
<dbReference type="EMBL" id="AY114071">
    <property type="protein sequence ID" value="AAM45119.1"/>
    <property type="molecule type" value="mRNA"/>
</dbReference>
<dbReference type="EMBL" id="AY088559">
    <property type="protein sequence ID" value="AAM66091.1"/>
    <property type="molecule type" value="mRNA"/>
</dbReference>
<dbReference type="PIR" id="S24835">
    <property type="entry name" value="S24835"/>
</dbReference>
<dbReference type="RefSeq" id="NP_196372.1">
    <property type="nucleotide sequence ID" value="NM_120837.5"/>
</dbReference>
<dbReference type="FunCoup" id="Q42574">
    <property type="interactions" value="9"/>
</dbReference>
<dbReference type="STRING" id="3702.Q42574"/>
<dbReference type="PaxDb" id="3702-AT5G07550.1"/>
<dbReference type="ProteomicsDB" id="175300"/>
<dbReference type="EnsemblPlants" id="AT5G07550.1">
    <property type="protein sequence ID" value="AT5G07550.1"/>
    <property type="gene ID" value="AT5G07550"/>
</dbReference>
<dbReference type="GeneID" id="830648"/>
<dbReference type="Gramene" id="AT5G07550.1">
    <property type="protein sequence ID" value="AT5G07550.1"/>
    <property type="gene ID" value="AT5G07550"/>
</dbReference>
<dbReference type="KEGG" id="ath:AT5G07550"/>
<dbReference type="Araport" id="AT5G07550"/>
<dbReference type="TAIR" id="AT5G07550">
    <property type="gene designation" value="GRP19"/>
</dbReference>
<dbReference type="HOGENOM" id="CLU_144388_1_0_1"/>
<dbReference type="InParanoid" id="Q42574"/>
<dbReference type="OMA" id="MWLFKKI"/>
<dbReference type="OrthoDB" id="1929188at2759"/>
<dbReference type="PhylomeDB" id="Q42574"/>
<dbReference type="PRO" id="PR:Q42574"/>
<dbReference type="Proteomes" id="UP000006548">
    <property type="component" value="Chromosome 5"/>
</dbReference>
<dbReference type="ExpressionAtlas" id="Q42574">
    <property type="expression patterns" value="baseline and differential"/>
</dbReference>
<dbReference type="GO" id="GO:0005576">
    <property type="term" value="C:extracellular region"/>
    <property type="evidence" value="ECO:0007669"/>
    <property type="project" value="UniProtKB-KW"/>
</dbReference>
<dbReference type="GO" id="GO:0016020">
    <property type="term" value="C:membrane"/>
    <property type="evidence" value="ECO:0007669"/>
    <property type="project" value="UniProtKB-SubCell"/>
</dbReference>
<dbReference type="GO" id="GO:0012511">
    <property type="term" value="C:monolayer-surrounded lipid storage body"/>
    <property type="evidence" value="ECO:0007669"/>
    <property type="project" value="InterPro"/>
</dbReference>
<dbReference type="GO" id="GO:0070505">
    <property type="term" value="C:pollen coat"/>
    <property type="evidence" value="ECO:0000314"/>
    <property type="project" value="UniProtKB"/>
</dbReference>
<dbReference type="GO" id="GO:0008289">
    <property type="term" value="F:lipid binding"/>
    <property type="evidence" value="ECO:0000250"/>
    <property type="project" value="TAIR"/>
</dbReference>
<dbReference type="GO" id="GO:0048655">
    <property type="term" value="P:anther wall tapetum morphogenesis"/>
    <property type="evidence" value="ECO:0000314"/>
    <property type="project" value="UniProtKB"/>
</dbReference>
<dbReference type="InterPro" id="IPR000136">
    <property type="entry name" value="Oleosin"/>
</dbReference>
<dbReference type="PANTHER" id="PTHR33203:SF26">
    <property type="entry name" value="GLYCINE-RICH PROTEIN-RELATED"/>
    <property type="match status" value="1"/>
</dbReference>
<dbReference type="PANTHER" id="PTHR33203">
    <property type="entry name" value="OLEOSIN"/>
    <property type="match status" value="1"/>
</dbReference>
<dbReference type="Pfam" id="PF01277">
    <property type="entry name" value="Oleosin"/>
    <property type="match status" value="1"/>
</dbReference>
<dbReference type="PROSITE" id="PS00811">
    <property type="entry name" value="OLEOSINS"/>
    <property type="match status" value="1"/>
</dbReference>
<proteinExistence type="evidence at protein level"/>
<organism>
    <name type="scientific">Arabidopsis thaliana</name>
    <name type="common">Mouse-ear cress</name>
    <dbReference type="NCBI Taxonomy" id="3702"/>
    <lineage>
        <taxon>Eukaryota</taxon>
        <taxon>Viridiplantae</taxon>
        <taxon>Streptophyta</taxon>
        <taxon>Embryophyta</taxon>
        <taxon>Tracheophyta</taxon>
        <taxon>Spermatophyta</taxon>
        <taxon>Magnoliopsida</taxon>
        <taxon>eudicotyledons</taxon>
        <taxon>Gunneridae</taxon>
        <taxon>Pentapetalae</taxon>
        <taxon>rosids</taxon>
        <taxon>malvids</taxon>
        <taxon>Brassicales</taxon>
        <taxon>Brassicaceae</taxon>
        <taxon>Camelineae</taxon>
        <taxon>Arabidopsis</taxon>
    </lineage>
</organism>
<feature type="chain" id="PRO_0000454877" description="Tapetal oleosin GRP-19">
    <location>
        <begin position="1"/>
        <end position="106"/>
    </location>
</feature>
<feature type="transmembrane region" description="Helical" evidence="3">
    <location>
        <begin position="14"/>
        <end position="34"/>
    </location>
</feature>
<feature type="transmembrane region" description="Helical" evidence="3">
    <location>
        <begin position="37"/>
        <end position="57"/>
    </location>
</feature>
<feature type="transmembrane region" description="Helical" evidence="3">
    <location>
        <begin position="58"/>
        <end position="78"/>
    </location>
</feature>
<feature type="region of interest" description="Disordered" evidence="4">
    <location>
        <begin position="84"/>
        <end position="106"/>
    </location>
</feature>
<gene>
    <name evidence="9" type="primary">GRP19</name>
    <name evidence="10" type="synonym">PUTG1</name>
    <name evidence="14" type="ordered locus">At5g07550</name>
    <name evidence="15" type="ORF">T2I1.260</name>
</gene>
<name>GRP19_ARATH</name>
<keyword id="KW-0272">Extracellular matrix</keyword>
<keyword id="KW-0551">Lipid droplet</keyword>
<keyword id="KW-0472">Membrane</keyword>
<keyword id="KW-1185">Reference proteome</keyword>
<keyword id="KW-0964">Secreted</keyword>
<keyword id="KW-0812">Transmembrane</keyword>
<keyword id="KW-1133">Transmembrane helix</keyword>
<reference key="1">
    <citation type="journal article" date="1993" name="Plant J.">
        <title>Inflorescence-specific genes from Arabidopsis thaliana encoding glycine-rich proteins.</title>
        <authorList>
            <person name="de Oliveira D.E."/>
            <person name="Franco L.O."/>
            <person name="Simoens C."/>
            <person name="Seurinck J."/>
            <person name="Coppieters J."/>
            <person name="Botterman J."/>
            <person name="Van Montagu M."/>
        </authorList>
    </citation>
    <scope>NUCLEOTIDE SEQUENCE [GENOMIC DNA]</scope>
    <source>
        <strain>cv. Columbia</strain>
    </source>
</reference>
<reference key="2">
    <citation type="journal article" date="2001" name="Science">
        <title>Gene families from the Arabidopsis thaliana pollen coat proteome.</title>
        <authorList>
            <person name="Mayfield J.A."/>
            <person name="Fiebig A."/>
            <person name="Johnstone S.E."/>
            <person name="Preuss D."/>
        </authorList>
    </citation>
    <scope>NUCLEOTIDE SEQUENCE [GENOMIC DNA]</scope>
    <scope>SUBCELLULAR LOCATION</scope>
    <scope>TISSUE SPECIFICITY</scope>
    <source>
        <strain>cv. Kas-1</strain>
        <strain>cv. Landsberg erecta</strain>
        <strain>cv. Wassilewskija-2</strain>
    </source>
</reference>
<reference key="3">
    <citation type="journal article" date="2000" name="Nature">
        <title>Sequence and analysis of chromosome 5 of the plant Arabidopsis thaliana.</title>
        <authorList>
            <person name="Tabata S."/>
            <person name="Kaneko T."/>
            <person name="Nakamura Y."/>
            <person name="Kotani H."/>
            <person name="Kato T."/>
            <person name="Asamizu E."/>
            <person name="Miyajima N."/>
            <person name="Sasamoto S."/>
            <person name="Kimura T."/>
            <person name="Hosouchi T."/>
            <person name="Kawashima K."/>
            <person name="Kohara M."/>
            <person name="Matsumoto M."/>
            <person name="Matsuno A."/>
            <person name="Muraki A."/>
            <person name="Nakayama S."/>
            <person name="Nakazaki N."/>
            <person name="Naruo K."/>
            <person name="Okumura S."/>
            <person name="Shinpo S."/>
            <person name="Takeuchi C."/>
            <person name="Wada T."/>
            <person name="Watanabe A."/>
            <person name="Yamada M."/>
            <person name="Yasuda M."/>
            <person name="Sato S."/>
            <person name="de la Bastide M."/>
            <person name="Huang E."/>
            <person name="Spiegel L."/>
            <person name="Gnoj L."/>
            <person name="O'Shaughnessy A."/>
            <person name="Preston R."/>
            <person name="Habermann K."/>
            <person name="Murray J."/>
            <person name="Johnson D."/>
            <person name="Rohlfing T."/>
            <person name="Nelson J."/>
            <person name="Stoneking T."/>
            <person name="Pepin K."/>
            <person name="Spieth J."/>
            <person name="Sekhon M."/>
            <person name="Armstrong J."/>
            <person name="Becker M."/>
            <person name="Belter E."/>
            <person name="Cordum H."/>
            <person name="Cordes M."/>
            <person name="Courtney L."/>
            <person name="Courtney W."/>
            <person name="Dante M."/>
            <person name="Du H."/>
            <person name="Edwards J."/>
            <person name="Fryman J."/>
            <person name="Haakensen B."/>
            <person name="Lamar E."/>
            <person name="Latreille P."/>
            <person name="Leonard S."/>
            <person name="Meyer R."/>
            <person name="Mulvaney E."/>
            <person name="Ozersky P."/>
            <person name="Riley A."/>
            <person name="Strowmatt C."/>
            <person name="Wagner-McPherson C."/>
            <person name="Wollam A."/>
            <person name="Yoakum M."/>
            <person name="Bell M."/>
            <person name="Dedhia N."/>
            <person name="Parnell L."/>
            <person name="Shah R."/>
            <person name="Rodriguez M."/>
            <person name="Hoon See L."/>
            <person name="Vil D."/>
            <person name="Baker J."/>
            <person name="Kirchoff K."/>
            <person name="Toth K."/>
            <person name="King L."/>
            <person name="Bahret A."/>
            <person name="Miller B."/>
            <person name="Marra M.A."/>
            <person name="Martienssen R."/>
            <person name="McCombie W.R."/>
            <person name="Wilson R.K."/>
            <person name="Murphy G."/>
            <person name="Bancroft I."/>
            <person name="Volckaert G."/>
            <person name="Wambutt R."/>
            <person name="Duesterhoeft A."/>
            <person name="Stiekema W."/>
            <person name="Pohl T."/>
            <person name="Entian K.-D."/>
            <person name="Terryn N."/>
            <person name="Hartley N."/>
            <person name="Bent E."/>
            <person name="Johnson S."/>
            <person name="Langham S.-A."/>
            <person name="McCullagh B."/>
            <person name="Robben J."/>
            <person name="Grymonprez B."/>
            <person name="Zimmermann W."/>
            <person name="Ramsperger U."/>
            <person name="Wedler H."/>
            <person name="Balke K."/>
            <person name="Wedler E."/>
            <person name="Peters S."/>
            <person name="van Staveren M."/>
            <person name="Dirkse W."/>
            <person name="Mooijman P."/>
            <person name="Klein Lankhorst R."/>
            <person name="Weitzenegger T."/>
            <person name="Bothe G."/>
            <person name="Rose M."/>
            <person name="Hauf J."/>
            <person name="Berneiser S."/>
            <person name="Hempel S."/>
            <person name="Feldpausch M."/>
            <person name="Lamberth S."/>
            <person name="Villarroel R."/>
            <person name="Gielen J."/>
            <person name="Ardiles W."/>
            <person name="Bents O."/>
            <person name="Lemcke K."/>
            <person name="Kolesov G."/>
            <person name="Mayer K.F.X."/>
            <person name="Rudd S."/>
            <person name="Schoof H."/>
            <person name="Schueller C."/>
            <person name="Zaccaria P."/>
            <person name="Mewes H.-W."/>
            <person name="Bevan M."/>
            <person name="Fransz P.F."/>
        </authorList>
    </citation>
    <scope>NUCLEOTIDE SEQUENCE [LARGE SCALE GENOMIC DNA]</scope>
    <source>
        <strain>cv. Columbia</strain>
    </source>
</reference>
<reference key="4">
    <citation type="journal article" date="2017" name="Plant J.">
        <title>Araport11: a complete reannotation of the Arabidopsis thaliana reference genome.</title>
        <authorList>
            <person name="Cheng C.Y."/>
            <person name="Krishnakumar V."/>
            <person name="Chan A.P."/>
            <person name="Thibaud-Nissen F."/>
            <person name="Schobel S."/>
            <person name="Town C.D."/>
        </authorList>
    </citation>
    <scope>GENOME REANNOTATION</scope>
    <source>
        <strain>cv. Columbia</strain>
    </source>
</reference>
<reference key="5">
    <citation type="journal article" date="2003" name="Science">
        <title>Empirical analysis of transcriptional activity in the Arabidopsis genome.</title>
        <authorList>
            <person name="Yamada K."/>
            <person name="Lim J."/>
            <person name="Dale J.M."/>
            <person name="Chen H."/>
            <person name="Shinn P."/>
            <person name="Palm C.J."/>
            <person name="Southwick A.M."/>
            <person name="Wu H.C."/>
            <person name="Kim C.J."/>
            <person name="Nguyen M."/>
            <person name="Pham P.K."/>
            <person name="Cheuk R.F."/>
            <person name="Karlin-Newmann G."/>
            <person name="Liu S.X."/>
            <person name="Lam B."/>
            <person name="Sakano H."/>
            <person name="Wu T."/>
            <person name="Yu G."/>
            <person name="Miranda M."/>
            <person name="Quach H.L."/>
            <person name="Tripp M."/>
            <person name="Chang C.H."/>
            <person name="Lee J.M."/>
            <person name="Toriumi M.J."/>
            <person name="Chan M.M."/>
            <person name="Tang C.C."/>
            <person name="Onodera C.S."/>
            <person name="Deng J.M."/>
            <person name="Akiyama K."/>
            <person name="Ansari Y."/>
            <person name="Arakawa T."/>
            <person name="Banh J."/>
            <person name="Banno F."/>
            <person name="Bowser L."/>
            <person name="Brooks S.Y."/>
            <person name="Carninci P."/>
            <person name="Chao Q."/>
            <person name="Choy N."/>
            <person name="Enju A."/>
            <person name="Goldsmith A.D."/>
            <person name="Gurjal M."/>
            <person name="Hansen N.F."/>
            <person name="Hayashizaki Y."/>
            <person name="Johnson-Hopson C."/>
            <person name="Hsuan V.W."/>
            <person name="Iida K."/>
            <person name="Karnes M."/>
            <person name="Khan S."/>
            <person name="Koesema E."/>
            <person name="Ishida J."/>
            <person name="Jiang P.X."/>
            <person name="Jones T."/>
            <person name="Kawai J."/>
            <person name="Kamiya A."/>
            <person name="Meyers C."/>
            <person name="Nakajima M."/>
            <person name="Narusaka M."/>
            <person name="Seki M."/>
            <person name="Sakurai T."/>
            <person name="Satou M."/>
            <person name="Tamse R."/>
            <person name="Vaysberg M."/>
            <person name="Wallender E.K."/>
            <person name="Wong C."/>
            <person name="Yamamura Y."/>
            <person name="Yuan S."/>
            <person name="Shinozaki K."/>
            <person name="Davis R.W."/>
            <person name="Theologis A."/>
            <person name="Ecker J.R."/>
        </authorList>
    </citation>
    <scope>NUCLEOTIDE SEQUENCE [LARGE SCALE MRNA]</scope>
    <source>
        <strain>cv. Columbia</strain>
    </source>
</reference>
<reference key="6">
    <citation type="submission" date="2002-03" db="EMBL/GenBank/DDBJ databases">
        <title>Full-length cDNA from Arabidopsis thaliana.</title>
        <authorList>
            <person name="Brover V.V."/>
            <person name="Troukhan M.E."/>
            <person name="Alexandrov N.A."/>
            <person name="Lu Y.-P."/>
            <person name="Flavell R.B."/>
            <person name="Feldmann K.A."/>
        </authorList>
    </citation>
    <scope>NUCLEOTIDE SEQUENCE [LARGE SCALE MRNA]</scope>
</reference>
<reference key="7">
    <citation type="journal article" date="2002" name="J. Biol. Chem.">
        <title>A novel group of oleosins is present inside the pollen of Arabidopsis.</title>
        <authorList>
            <person name="Kim H.U."/>
            <person name="Hsieh K."/>
            <person name="Ratnayake C."/>
            <person name="Huang A.H.C."/>
        </authorList>
    </citation>
    <scope>TISSUE SPECIFICITY</scope>
    <scope>DEVELOPMENTAL STAGE</scope>
</reference>
<reference key="8">
    <citation type="journal article" date="2004" name="Mol. Biol. Evol.">
        <title>Rapid evolution of a pollen-specific oleosin-like gene family from Arabidopsis thaliana and closely related species.</title>
        <authorList>
            <person name="Schein M."/>
            <person name="Yang Z."/>
            <person name="Mitchell-Olds T."/>
            <person name="Schmid K.J."/>
        </authorList>
    </citation>
    <scope>TISSUE SPECIFICITY</scope>
    <scope>GENE FAMILY</scope>
</reference>
<reference key="9">
    <citation type="journal article" date="2016" name="New Phytol.">
        <title>Tapetal oleosins play an essential role in tapetosome formation and protein relocation to the pollen coat.</title>
        <authorList>
            <person name="Levesque-Lemay M."/>
            <person name="Chabot D."/>
            <person name="Hubbard K."/>
            <person name="Chan J.K."/>
            <person name="Miller S."/>
            <person name="Robert L.S."/>
        </authorList>
    </citation>
    <scope>FUNCTION</scope>
    <scope>SUBCELLULAR LOCATION</scope>
    <scope>TISSUE SPECIFICITY</scope>
    <scope>DEVELOPMENTAL STAGE</scope>
    <scope>PROTEOLYTIC CLEAVAGE</scope>
    <source>
        <strain>cv. Columbia</strain>
    </source>
</reference>
<protein>
    <recommendedName>
        <fullName evidence="9">Tapetal oleosin GRP-19</fullName>
        <shortName evidence="13">T-oleosin GRP-19</shortName>
    </recommendedName>
    <alternativeName>
        <fullName evidence="9">Glycine-rich protein 19</fullName>
        <shortName evidence="9">AtGRP19</shortName>
    </alternativeName>
    <alternativeName>
        <fullName evidence="12">Oleopollenin GRP-19</fullName>
    </alternativeName>
    <alternativeName>
        <fullName evidence="10">Putative glycine-rich protein 1</fullName>
        <shortName evidence="10">PutG-1</shortName>
    </alternativeName>
</protein>
<sequence>MFEIIQAVFSAGVALALLTFAGITLGGSVVACIISTPLFVIFSPVLVPATIATTLLASGFTASGSFGATAFTILSWLYKKRTGRDLPKIPGLTPPAPASNPAGSGV</sequence>
<evidence type="ECO:0000250" key="1">
    <source>
        <dbReference type="UniProtKB" id="C3S7F0"/>
    </source>
</evidence>
<evidence type="ECO:0000250" key="2">
    <source>
        <dbReference type="UniProtKB" id="Q9LY09"/>
    </source>
</evidence>
<evidence type="ECO:0000255" key="3"/>
<evidence type="ECO:0000256" key="4">
    <source>
        <dbReference type="SAM" id="MobiDB-lite"/>
    </source>
</evidence>
<evidence type="ECO:0000269" key="5">
    <source>
    </source>
</evidence>
<evidence type="ECO:0000269" key="6">
    <source>
    </source>
</evidence>
<evidence type="ECO:0000269" key="7">
    <source>
    </source>
</evidence>
<evidence type="ECO:0000269" key="8">
    <source>
    </source>
</evidence>
<evidence type="ECO:0000303" key="9">
    <source>
    </source>
</evidence>
<evidence type="ECO:0000303" key="10">
    <source>
    </source>
</evidence>
<evidence type="ECO:0000305" key="11"/>
<evidence type="ECO:0000305" key="12">
    <source>
    </source>
</evidence>
<evidence type="ECO:0000305" key="13">
    <source>
    </source>
</evidence>
<evidence type="ECO:0000312" key="14">
    <source>
        <dbReference type="Araport" id="AT5G07550"/>
    </source>
</evidence>
<evidence type="ECO:0000312" key="15">
    <source>
        <dbReference type="EMBL" id="CAB87944.1"/>
    </source>
</evidence>
<accession>Q42574</accession>
<comment type="function">
    <text evidence="8">Lipid-binding oleosin involved in anther tapetum development, especially for the physiology of tapetosomes (PubMed:26305561). Also implicated in the formation of pollen coat (PubMed:26305561).</text>
</comment>
<comment type="subcellular location">
    <subcellularLocation>
        <location evidence="5 8">Secreted</location>
        <location evidence="5 8">Extracellular space</location>
        <location evidence="5 8">Extracellular matrix</location>
        <location evidence="5 8">Pollen coat</location>
    </subcellularLocation>
    <subcellularLocation>
        <location evidence="2">Lipid droplet</location>
    </subcellularLocation>
    <subcellularLocation>
        <location evidence="3">Membrane</location>
        <topology evidence="3">Multi-pass membrane protein</topology>
    </subcellularLocation>
    <text evidence="1 8">Surface of oil bodies (By similarity). Oleosins exist at a monolayer lipid/water interface (By similarity). Associated with discrete organelles within the anther tapetum called tapetosomes and with a network of structures previously described as fibrils or 'strings of beads' (PubMed:26305561).</text>
</comment>
<comment type="tissue specificity">
    <text evidence="5 6 7 8">Present in pollen (at protein level) (PubMed:11431566, PubMed:26305561). Inflorescence-specific expression, especially in flowers florets (PubMed:11929861, PubMed:14739246).</text>
</comment>
<comment type="developmental stage">
    <text evidence="6 8">In flowers, present in the anther tapetum early in anther development and later in the pollen coat (PubMed:11929861, PubMed:26305561). Upon tapetum degeneration, associated with tapetosomal debris 'in transit' to the pollen cell wall in the anther locule (PubMed:26305561).</text>
</comment>
<comment type="PTM">
    <text evidence="8">Proteolytically cleaved following anther tapetal breakdown.</text>
</comment>
<comment type="similarity">
    <text evidence="11">Belongs to the oleosin family.</text>
</comment>